<protein>
    <recommendedName>
        <fullName evidence="1">Nucleoid occlusion factor SlmA</fullName>
    </recommendedName>
</protein>
<reference key="1">
    <citation type="journal article" date="2004" name="Proc. Natl. Acad. Sci. U.S.A.">
        <title>Insights into the evolution of Yersinia pestis through whole-genome comparison with Yersinia pseudotuberculosis.</title>
        <authorList>
            <person name="Chain P.S.G."/>
            <person name="Carniel E."/>
            <person name="Larimer F.W."/>
            <person name="Lamerdin J."/>
            <person name="Stoutland P.O."/>
            <person name="Regala W.M."/>
            <person name="Georgescu A.M."/>
            <person name="Vergez L.M."/>
            <person name="Land M.L."/>
            <person name="Motin V.L."/>
            <person name="Brubaker R.R."/>
            <person name="Fowler J."/>
            <person name="Hinnebusch J."/>
            <person name="Marceau M."/>
            <person name="Medigue C."/>
            <person name="Simonet M."/>
            <person name="Chenal-Francisque V."/>
            <person name="Souza B."/>
            <person name="Dacheux D."/>
            <person name="Elliott J.M."/>
            <person name="Derbise A."/>
            <person name="Hauser L.J."/>
            <person name="Garcia E."/>
        </authorList>
    </citation>
    <scope>NUCLEOTIDE SEQUENCE [LARGE SCALE GENOMIC DNA]</scope>
    <source>
        <strain>IP32953</strain>
    </source>
</reference>
<feature type="chain" id="PRO_0000198989" description="Nucleoid occlusion factor SlmA">
    <location>
        <begin position="1"/>
        <end position="198"/>
    </location>
</feature>
<feature type="domain" description="HTH tetR-type" evidence="1">
    <location>
        <begin position="9"/>
        <end position="70"/>
    </location>
</feature>
<feature type="DNA-binding region" description="H-T-H motif" evidence="1">
    <location>
        <begin position="33"/>
        <end position="52"/>
    </location>
</feature>
<feature type="coiled-coil region" evidence="1">
    <location>
        <begin position="119"/>
        <end position="144"/>
    </location>
</feature>
<gene>
    <name evidence="1" type="primary">slmA</name>
    <name type="ordered locus">YPTB0043</name>
</gene>
<dbReference type="EMBL" id="BX936398">
    <property type="protein sequence ID" value="CAH19283.1"/>
    <property type="molecule type" value="Genomic_DNA"/>
</dbReference>
<dbReference type="RefSeq" id="WP_002208995.1">
    <property type="nucleotide sequence ID" value="NZ_CP009712.1"/>
</dbReference>
<dbReference type="SMR" id="Q66GD9"/>
<dbReference type="GeneID" id="96663527"/>
<dbReference type="KEGG" id="ypo:BZ17_2552"/>
<dbReference type="KEGG" id="yps:YPTB0043"/>
<dbReference type="PATRIC" id="fig|273123.14.peg.2677"/>
<dbReference type="Proteomes" id="UP000001011">
    <property type="component" value="Chromosome"/>
</dbReference>
<dbReference type="GO" id="GO:0043590">
    <property type="term" value="C:bacterial nucleoid"/>
    <property type="evidence" value="ECO:0007669"/>
    <property type="project" value="UniProtKB-UniRule"/>
</dbReference>
<dbReference type="GO" id="GO:0005737">
    <property type="term" value="C:cytoplasm"/>
    <property type="evidence" value="ECO:0007669"/>
    <property type="project" value="UniProtKB-UniRule"/>
</dbReference>
<dbReference type="GO" id="GO:0003700">
    <property type="term" value="F:DNA-binding transcription factor activity"/>
    <property type="evidence" value="ECO:0007669"/>
    <property type="project" value="TreeGrafter"/>
</dbReference>
<dbReference type="GO" id="GO:0000976">
    <property type="term" value="F:transcription cis-regulatory region binding"/>
    <property type="evidence" value="ECO:0007669"/>
    <property type="project" value="TreeGrafter"/>
</dbReference>
<dbReference type="GO" id="GO:0051301">
    <property type="term" value="P:cell division"/>
    <property type="evidence" value="ECO:0007669"/>
    <property type="project" value="UniProtKB-KW"/>
</dbReference>
<dbReference type="GO" id="GO:0010974">
    <property type="term" value="P:negative regulation of division septum assembly"/>
    <property type="evidence" value="ECO:0007669"/>
    <property type="project" value="InterPro"/>
</dbReference>
<dbReference type="FunFam" id="1.10.357.10:FF:000002">
    <property type="entry name" value="Nucleoid occlusion factor SlmA"/>
    <property type="match status" value="1"/>
</dbReference>
<dbReference type="Gene3D" id="1.10.357.10">
    <property type="entry name" value="Tetracycline Repressor, domain 2"/>
    <property type="match status" value="1"/>
</dbReference>
<dbReference type="HAMAP" id="MF_01839">
    <property type="entry name" value="NO_factor_SlmA"/>
    <property type="match status" value="1"/>
</dbReference>
<dbReference type="InterPro" id="IPR023772">
    <property type="entry name" value="DNA-bd_HTH_TetR-type_CS"/>
</dbReference>
<dbReference type="InterPro" id="IPR009057">
    <property type="entry name" value="Homeodomain-like_sf"/>
</dbReference>
<dbReference type="InterPro" id="IPR050109">
    <property type="entry name" value="HTH-type_TetR-like_transc_reg"/>
</dbReference>
<dbReference type="InterPro" id="IPR001647">
    <property type="entry name" value="HTH_TetR"/>
</dbReference>
<dbReference type="InterPro" id="IPR023769">
    <property type="entry name" value="NO_SlmA"/>
</dbReference>
<dbReference type="InterPro" id="IPR054580">
    <property type="entry name" value="SlmA-like_C"/>
</dbReference>
<dbReference type="InterPro" id="IPR036271">
    <property type="entry name" value="Tet_transcr_reg_TetR-rel_C_sf"/>
</dbReference>
<dbReference type="NCBIfam" id="NF007015">
    <property type="entry name" value="PRK09480.1"/>
    <property type="match status" value="1"/>
</dbReference>
<dbReference type="PANTHER" id="PTHR30055">
    <property type="entry name" value="HTH-TYPE TRANSCRIPTIONAL REGULATOR RUTR"/>
    <property type="match status" value="1"/>
</dbReference>
<dbReference type="PANTHER" id="PTHR30055:SF183">
    <property type="entry name" value="NUCLEOID OCCLUSION FACTOR SLMA"/>
    <property type="match status" value="1"/>
</dbReference>
<dbReference type="Pfam" id="PF22276">
    <property type="entry name" value="SlmA-like_C"/>
    <property type="match status" value="1"/>
</dbReference>
<dbReference type="Pfam" id="PF00440">
    <property type="entry name" value="TetR_N"/>
    <property type="match status" value="1"/>
</dbReference>
<dbReference type="SUPFAM" id="SSF46689">
    <property type="entry name" value="Homeodomain-like"/>
    <property type="match status" value="1"/>
</dbReference>
<dbReference type="SUPFAM" id="SSF48498">
    <property type="entry name" value="Tetracyclin repressor-like, C-terminal domain"/>
    <property type="match status" value="1"/>
</dbReference>
<dbReference type="PROSITE" id="PS01081">
    <property type="entry name" value="HTH_TETR_1"/>
    <property type="match status" value="1"/>
</dbReference>
<dbReference type="PROSITE" id="PS50977">
    <property type="entry name" value="HTH_TETR_2"/>
    <property type="match status" value="1"/>
</dbReference>
<comment type="function">
    <text evidence="1">Required for nucleoid occlusion (NO) phenomenon, which prevents Z-ring formation and cell division over the nucleoid. Acts as a DNA-associated cell division inhibitor that binds simultaneously chromosomal DNA and FtsZ, and disrupts the assembly of FtsZ polymers. SlmA-DNA-binding sequences (SBS) are dispersed on non-Ter regions of the chromosome, preventing FtsZ polymerization at these regions.</text>
</comment>
<comment type="subunit">
    <text evidence="1">Homodimer. Interacts with FtsZ.</text>
</comment>
<comment type="subcellular location">
    <subcellularLocation>
        <location evidence="1">Cytoplasm</location>
        <location evidence="1">Nucleoid</location>
    </subcellularLocation>
</comment>
<comment type="similarity">
    <text evidence="1">Belongs to the nucleoid occlusion factor SlmA family.</text>
</comment>
<sequence>MAEKENTKRNRREEILQALAQMLESSDGSQRITTAKLAANVGVSEAALYRHFPSKTRMFDSLIEFIEDSLMSRINLILQDEKETFNRLRLILLLVLGFAERNPGLTRIMTGHALMFEQDRLQGRINQLFERIEMQLRQVLREKKLRDGQGFIHDEALLATQLLAFCEGMLSRFVRSEFRYCPTQEFDSRWPLIVAQLQ</sequence>
<keyword id="KW-0131">Cell cycle</keyword>
<keyword id="KW-0132">Cell division</keyword>
<keyword id="KW-0175">Coiled coil</keyword>
<keyword id="KW-0963">Cytoplasm</keyword>
<keyword id="KW-0238">DNA-binding</keyword>
<organism>
    <name type="scientific">Yersinia pseudotuberculosis serotype I (strain IP32953)</name>
    <dbReference type="NCBI Taxonomy" id="273123"/>
    <lineage>
        <taxon>Bacteria</taxon>
        <taxon>Pseudomonadati</taxon>
        <taxon>Pseudomonadota</taxon>
        <taxon>Gammaproteobacteria</taxon>
        <taxon>Enterobacterales</taxon>
        <taxon>Yersiniaceae</taxon>
        <taxon>Yersinia</taxon>
    </lineage>
</organism>
<evidence type="ECO:0000255" key="1">
    <source>
        <dbReference type="HAMAP-Rule" id="MF_01839"/>
    </source>
</evidence>
<name>SLMA_YERPS</name>
<accession>Q66GD9</accession>
<proteinExistence type="inferred from homology"/>